<protein>
    <recommendedName>
        <fullName evidence="1">2-dehydro-3-deoxyphosphooctonate aldolase</fullName>
        <ecNumber evidence="1">2.5.1.55</ecNumber>
    </recommendedName>
    <alternativeName>
        <fullName evidence="1">3-deoxy-D-manno-octulosonic acid 8-phosphate synthase</fullName>
    </alternativeName>
    <alternativeName>
        <fullName evidence="1">KDO-8-phosphate synthase</fullName>
        <shortName evidence="1">KDO 8-P synthase</shortName>
        <shortName evidence="1">KDOPS</shortName>
    </alternativeName>
    <alternativeName>
        <fullName evidence="1">Phospho-2-dehydro-3-deoxyoctonate aldolase</fullName>
    </alternativeName>
</protein>
<name>KDSA_BRUSI</name>
<sequence>MVTANSTVKVGNVTFSNSAPLALIAGPCQMETRDHAFEMAGHLKEMTDKLGIGLVYKSSFDKANRTSLKAARGIGLEKALEVFSDLKKEYGFPVLTDIHTEEQCAAVAPVVDVLQIPAFLCRQTDLLIAAARTGRVVNVKKGQFLAPWDMKNVLAKITESGNPNVLATERGVSFGYNTLVSDMRALPIMAGLGAPVIFDATHSVQQPGGQGGSTGGQREFVETLARAAVAVGVAGLFIETHEDPDNAPSDGPNMVPIDKMPALLEKLMAFDRIAKAL</sequence>
<feature type="chain" id="PRO_1000074981" description="2-dehydro-3-deoxyphosphooctonate aldolase">
    <location>
        <begin position="1"/>
        <end position="277"/>
    </location>
</feature>
<reference key="1">
    <citation type="submission" date="2007-12" db="EMBL/GenBank/DDBJ databases">
        <title>Brucella suis ATCC 23445 whole genome shotgun sequencing project.</title>
        <authorList>
            <person name="Setubal J.C."/>
            <person name="Bowns C."/>
            <person name="Boyle S."/>
            <person name="Crasta O.R."/>
            <person name="Czar M.J."/>
            <person name="Dharmanolla C."/>
            <person name="Gillespie J.J."/>
            <person name="Kenyon R.W."/>
            <person name="Lu J."/>
            <person name="Mane S."/>
            <person name="Mohapatra S."/>
            <person name="Nagrani S."/>
            <person name="Purkayastha A."/>
            <person name="Rajasimha H.K."/>
            <person name="Shallom J.M."/>
            <person name="Shallom S."/>
            <person name="Shukla M."/>
            <person name="Snyder E.E."/>
            <person name="Sobral B.W."/>
            <person name="Wattam A.R."/>
            <person name="Will R."/>
            <person name="Williams K."/>
            <person name="Yoo H."/>
            <person name="Bruce D."/>
            <person name="Detter C."/>
            <person name="Munk C."/>
            <person name="Brettin T.S."/>
        </authorList>
    </citation>
    <scope>NUCLEOTIDE SEQUENCE [LARGE SCALE GENOMIC DNA]</scope>
    <source>
        <strain>ATCC 23445 / NCTC 10510</strain>
    </source>
</reference>
<accession>B0CGT3</accession>
<dbReference type="EC" id="2.5.1.55" evidence="1"/>
<dbReference type="EMBL" id="CP000911">
    <property type="protein sequence ID" value="ABY38234.1"/>
    <property type="molecule type" value="Genomic_DNA"/>
</dbReference>
<dbReference type="RefSeq" id="WP_004690885.1">
    <property type="nucleotide sequence ID" value="NC_010169.1"/>
</dbReference>
<dbReference type="SMR" id="B0CGT3"/>
<dbReference type="GeneID" id="55590817"/>
<dbReference type="KEGG" id="bmt:BSUIS_A1182"/>
<dbReference type="HOGENOM" id="CLU_036666_0_0_5"/>
<dbReference type="UniPathway" id="UPA00030"/>
<dbReference type="UniPathway" id="UPA00357">
    <property type="reaction ID" value="UER00474"/>
</dbReference>
<dbReference type="Proteomes" id="UP000008545">
    <property type="component" value="Chromosome I"/>
</dbReference>
<dbReference type="GO" id="GO:0005737">
    <property type="term" value="C:cytoplasm"/>
    <property type="evidence" value="ECO:0007669"/>
    <property type="project" value="UniProtKB-SubCell"/>
</dbReference>
<dbReference type="GO" id="GO:0008676">
    <property type="term" value="F:3-deoxy-8-phosphooctulonate synthase activity"/>
    <property type="evidence" value="ECO:0007669"/>
    <property type="project" value="UniProtKB-UniRule"/>
</dbReference>
<dbReference type="GO" id="GO:0019294">
    <property type="term" value="P:keto-3-deoxy-D-manno-octulosonic acid biosynthetic process"/>
    <property type="evidence" value="ECO:0007669"/>
    <property type="project" value="UniProtKB-UniRule"/>
</dbReference>
<dbReference type="Gene3D" id="3.20.20.70">
    <property type="entry name" value="Aldolase class I"/>
    <property type="match status" value="1"/>
</dbReference>
<dbReference type="HAMAP" id="MF_00056">
    <property type="entry name" value="KDO8P_synth"/>
    <property type="match status" value="1"/>
</dbReference>
<dbReference type="InterPro" id="IPR013785">
    <property type="entry name" value="Aldolase_TIM"/>
</dbReference>
<dbReference type="InterPro" id="IPR006218">
    <property type="entry name" value="DAHP1/KDSA"/>
</dbReference>
<dbReference type="InterPro" id="IPR006269">
    <property type="entry name" value="KDO8P_synthase"/>
</dbReference>
<dbReference type="NCBIfam" id="TIGR01362">
    <property type="entry name" value="KDO8P_synth"/>
    <property type="match status" value="1"/>
</dbReference>
<dbReference type="NCBIfam" id="NF003543">
    <property type="entry name" value="PRK05198.1"/>
    <property type="match status" value="1"/>
</dbReference>
<dbReference type="PANTHER" id="PTHR21057">
    <property type="entry name" value="PHOSPHO-2-DEHYDRO-3-DEOXYHEPTONATE ALDOLASE"/>
    <property type="match status" value="1"/>
</dbReference>
<dbReference type="Pfam" id="PF00793">
    <property type="entry name" value="DAHP_synth_1"/>
    <property type="match status" value="1"/>
</dbReference>
<dbReference type="SUPFAM" id="SSF51569">
    <property type="entry name" value="Aldolase"/>
    <property type="match status" value="1"/>
</dbReference>
<gene>
    <name evidence="1" type="primary">kdsA</name>
    <name type="ordered locus">BSUIS_A1182</name>
</gene>
<comment type="catalytic activity">
    <reaction evidence="1">
        <text>D-arabinose 5-phosphate + phosphoenolpyruvate + H2O = 3-deoxy-alpha-D-manno-2-octulosonate-8-phosphate + phosphate</text>
        <dbReference type="Rhea" id="RHEA:14053"/>
        <dbReference type="ChEBI" id="CHEBI:15377"/>
        <dbReference type="ChEBI" id="CHEBI:43474"/>
        <dbReference type="ChEBI" id="CHEBI:57693"/>
        <dbReference type="ChEBI" id="CHEBI:58702"/>
        <dbReference type="ChEBI" id="CHEBI:85985"/>
        <dbReference type="EC" id="2.5.1.55"/>
    </reaction>
</comment>
<comment type="pathway">
    <text evidence="1">Carbohydrate biosynthesis; 3-deoxy-D-manno-octulosonate biosynthesis; 3-deoxy-D-manno-octulosonate from D-ribulose 5-phosphate: step 2/3.</text>
</comment>
<comment type="pathway">
    <text evidence="1">Bacterial outer membrane biogenesis; lipopolysaccharide biosynthesis.</text>
</comment>
<comment type="subcellular location">
    <subcellularLocation>
        <location evidence="1">Cytoplasm</location>
    </subcellularLocation>
</comment>
<comment type="similarity">
    <text evidence="1">Belongs to the KdsA family.</text>
</comment>
<organism>
    <name type="scientific">Brucella suis (strain ATCC 23445 / NCTC 10510)</name>
    <dbReference type="NCBI Taxonomy" id="470137"/>
    <lineage>
        <taxon>Bacteria</taxon>
        <taxon>Pseudomonadati</taxon>
        <taxon>Pseudomonadota</taxon>
        <taxon>Alphaproteobacteria</taxon>
        <taxon>Hyphomicrobiales</taxon>
        <taxon>Brucellaceae</taxon>
        <taxon>Brucella/Ochrobactrum group</taxon>
        <taxon>Brucella</taxon>
    </lineage>
</organism>
<keyword id="KW-0963">Cytoplasm</keyword>
<keyword id="KW-0448">Lipopolysaccharide biosynthesis</keyword>
<keyword id="KW-0808">Transferase</keyword>
<proteinExistence type="inferred from homology"/>
<evidence type="ECO:0000255" key="1">
    <source>
        <dbReference type="HAMAP-Rule" id="MF_00056"/>
    </source>
</evidence>